<protein>
    <recommendedName>
        <fullName evidence="1">Acetyl-coenzyme A synthetase</fullName>
        <shortName evidence="1">AcCoA synthetase</shortName>
        <shortName evidence="1">Acs</shortName>
        <ecNumber evidence="1">6.2.1.1</ecNumber>
    </recommendedName>
    <alternativeName>
        <fullName evidence="1">Acetate--CoA ligase</fullName>
    </alternativeName>
    <alternativeName>
        <fullName evidence="1">Acyl-activating enzyme</fullName>
    </alternativeName>
</protein>
<keyword id="KW-0007">Acetylation</keyword>
<keyword id="KW-0067">ATP-binding</keyword>
<keyword id="KW-0436">Ligase</keyword>
<keyword id="KW-0460">Magnesium</keyword>
<keyword id="KW-0479">Metal-binding</keyword>
<keyword id="KW-0547">Nucleotide-binding</keyword>
<keyword id="KW-1185">Reference proteome</keyword>
<dbReference type="EC" id="6.2.1.1" evidence="1"/>
<dbReference type="EMBL" id="AE005174">
    <property type="protein sequence ID" value="AAG59267.1"/>
    <property type="molecule type" value="Genomic_DNA"/>
</dbReference>
<dbReference type="EMBL" id="BA000007">
    <property type="protein sequence ID" value="BAB38474.1"/>
    <property type="molecule type" value="Genomic_DNA"/>
</dbReference>
<dbReference type="PIR" id="C91260">
    <property type="entry name" value="C91260"/>
</dbReference>
<dbReference type="PIR" id="G86100">
    <property type="entry name" value="G86100"/>
</dbReference>
<dbReference type="RefSeq" id="NP_313078.1">
    <property type="nucleotide sequence ID" value="NC_002695.1"/>
</dbReference>
<dbReference type="RefSeq" id="WP_000078217.1">
    <property type="nucleotide sequence ID" value="NZ_VOAI01000008.1"/>
</dbReference>
<dbReference type="SMR" id="Q8X5T5"/>
<dbReference type="STRING" id="155864.Z5668"/>
<dbReference type="GeneID" id="914284"/>
<dbReference type="KEGG" id="ece:Z5668"/>
<dbReference type="KEGG" id="ecs:ECs_5051"/>
<dbReference type="PATRIC" id="fig|386585.9.peg.5277"/>
<dbReference type="eggNOG" id="COG0365">
    <property type="taxonomic scope" value="Bacteria"/>
</dbReference>
<dbReference type="HOGENOM" id="CLU_000022_3_6_6"/>
<dbReference type="OMA" id="INVSYNC"/>
<dbReference type="SABIO-RK" id="Q8X5T5"/>
<dbReference type="Proteomes" id="UP000000558">
    <property type="component" value="Chromosome"/>
</dbReference>
<dbReference type="Proteomes" id="UP000002519">
    <property type="component" value="Chromosome"/>
</dbReference>
<dbReference type="GO" id="GO:0005829">
    <property type="term" value="C:cytosol"/>
    <property type="evidence" value="ECO:0007669"/>
    <property type="project" value="TreeGrafter"/>
</dbReference>
<dbReference type="GO" id="GO:0003987">
    <property type="term" value="F:acetate-CoA ligase activity"/>
    <property type="evidence" value="ECO:0007669"/>
    <property type="project" value="UniProtKB-UniRule"/>
</dbReference>
<dbReference type="GO" id="GO:0016208">
    <property type="term" value="F:AMP binding"/>
    <property type="evidence" value="ECO:0007669"/>
    <property type="project" value="InterPro"/>
</dbReference>
<dbReference type="GO" id="GO:0005524">
    <property type="term" value="F:ATP binding"/>
    <property type="evidence" value="ECO:0007669"/>
    <property type="project" value="UniProtKB-KW"/>
</dbReference>
<dbReference type="GO" id="GO:0046872">
    <property type="term" value="F:metal ion binding"/>
    <property type="evidence" value="ECO:0007669"/>
    <property type="project" value="UniProtKB-KW"/>
</dbReference>
<dbReference type="GO" id="GO:0019427">
    <property type="term" value="P:acetyl-CoA biosynthetic process from acetate"/>
    <property type="evidence" value="ECO:0007669"/>
    <property type="project" value="UniProtKB-UniRule"/>
</dbReference>
<dbReference type="GO" id="GO:0006935">
    <property type="term" value="P:chemotaxis"/>
    <property type="evidence" value="ECO:0007669"/>
    <property type="project" value="UniProtKB-UniRule"/>
</dbReference>
<dbReference type="CDD" id="cd05966">
    <property type="entry name" value="ACS"/>
    <property type="match status" value="1"/>
</dbReference>
<dbReference type="FunFam" id="3.30.300.30:FF:000004">
    <property type="entry name" value="Acetyl-coenzyme A synthetase"/>
    <property type="match status" value="1"/>
</dbReference>
<dbReference type="FunFam" id="3.40.50.12780:FF:000001">
    <property type="entry name" value="Acetyl-coenzyme A synthetase"/>
    <property type="match status" value="1"/>
</dbReference>
<dbReference type="Gene3D" id="3.30.300.30">
    <property type="match status" value="1"/>
</dbReference>
<dbReference type="Gene3D" id="3.40.50.12780">
    <property type="entry name" value="N-terminal domain of ligase-like"/>
    <property type="match status" value="1"/>
</dbReference>
<dbReference type="HAMAP" id="MF_01123">
    <property type="entry name" value="Ac_CoA_synth"/>
    <property type="match status" value="1"/>
</dbReference>
<dbReference type="InterPro" id="IPR011904">
    <property type="entry name" value="Ac_CoA_lig"/>
</dbReference>
<dbReference type="InterPro" id="IPR032387">
    <property type="entry name" value="ACAS_N"/>
</dbReference>
<dbReference type="InterPro" id="IPR025110">
    <property type="entry name" value="AMP-bd_C"/>
</dbReference>
<dbReference type="InterPro" id="IPR045851">
    <property type="entry name" value="AMP-bd_C_sf"/>
</dbReference>
<dbReference type="InterPro" id="IPR020845">
    <property type="entry name" value="AMP-binding_CS"/>
</dbReference>
<dbReference type="InterPro" id="IPR000873">
    <property type="entry name" value="AMP-dep_synth/lig_dom"/>
</dbReference>
<dbReference type="InterPro" id="IPR042099">
    <property type="entry name" value="ANL_N_sf"/>
</dbReference>
<dbReference type="NCBIfam" id="TIGR02188">
    <property type="entry name" value="Ac_CoA_lig_AcsA"/>
    <property type="match status" value="1"/>
</dbReference>
<dbReference type="NCBIfam" id="NF001208">
    <property type="entry name" value="PRK00174.1"/>
    <property type="match status" value="1"/>
</dbReference>
<dbReference type="PANTHER" id="PTHR24095">
    <property type="entry name" value="ACETYL-COENZYME A SYNTHETASE"/>
    <property type="match status" value="1"/>
</dbReference>
<dbReference type="PANTHER" id="PTHR24095:SF243">
    <property type="entry name" value="ACETYL-COENZYME A SYNTHETASE"/>
    <property type="match status" value="1"/>
</dbReference>
<dbReference type="Pfam" id="PF16177">
    <property type="entry name" value="ACAS_N"/>
    <property type="match status" value="1"/>
</dbReference>
<dbReference type="Pfam" id="PF00501">
    <property type="entry name" value="AMP-binding"/>
    <property type="match status" value="1"/>
</dbReference>
<dbReference type="Pfam" id="PF13193">
    <property type="entry name" value="AMP-binding_C"/>
    <property type="match status" value="1"/>
</dbReference>
<dbReference type="SUPFAM" id="SSF56801">
    <property type="entry name" value="Acetyl-CoA synthetase-like"/>
    <property type="match status" value="1"/>
</dbReference>
<dbReference type="PROSITE" id="PS00455">
    <property type="entry name" value="AMP_BINDING"/>
    <property type="match status" value="1"/>
</dbReference>
<evidence type="ECO:0000255" key="1">
    <source>
        <dbReference type="HAMAP-Rule" id="MF_01123"/>
    </source>
</evidence>
<gene>
    <name evidence="1" type="primary">acs</name>
    <name type="ordered locus">Z5668</name>
    <name type="ordered locus">ECs5051</name>
</gene>
<sequence>MSQIHKHTIPANIADRCLINPQQYEAMYQQSINAPDTFWGEQGKILDWIKPYQKVKNTSFAPGNVSIKWYEDGTLNLAANCLDRHLQENGDRTAIIWEGDDASQSKHISYKELHRDVCRFANTLLKLGIKKGDVVAIYMPMVPEAAVAMLACARIGAVHSVIFGGFSPEAVAGRIIDSNSRLVITSDEGVRAGRSIPLKKNVDDALKNPNVTSVEHVVVLKRTGGKIDWQEGRDLWWHDQVEQASDQHQAEEMNAEDPLFILYTSGSTGKPKGVLHTTGGYLVYAALTFKYVFDYHPGDIYWCTADVGWVTGHSYLLYGPLACGATTLMFEGVPNWPTPARMAQVVDKHQVNILYTAPTAIRALMAEGDKAIEGTDRSSLRILGSVGEPINPEAWEWYWKKIGNEKCPVVDTWWQTETGGFMITPLPGATELKAGSATRPFFGVQPALVDNEGNPLEGATEGSLVITDSWPGQARTLFGDHERFEQTYFSTFKNMYFSGDGARRDEDSYYWITGRVDDVLNVSGHRLGTAEIESALVAHPKIAEAAVVGIPHNIKGQAIYAYVTLNHGEEPSPELYAEVRNWVRKEIGPLATPDVLHWTDSLPKTRSGKIMRRILRKIAAGDTSNLGDTSTLADPGVVEKLLEEKQAIAMPS</sequence>
<name>ACSA_ECO57</name>
<comment type="function">
    <text evidence="1">Catalyzes the conversion of acetate into acetyl-CoA (AcCoA), an essential intermediate at the junction of anabolic and catabolic pathways. Acs undergoes a two-step reaction. In the first half reaction, Acs combines acetate with ATP to form acetyl-adenylate (AcAMP) intermediate. In the second half reaction, it can then transfer the acetyl group from AcAMP to the sulfhydryl group of CoA, forming the product AcCoA.</text>
</comment>
<comment type="function">
    <text evidence="1">Enables the cell to use acetate during aerobic growth to generate energy via the TCA cycle, and biosynthetic compounds via the glyoxylate shunt. Acetylates CheY, the response regulator involved in flagellar movement and chemotaxis.</text>
</comment>
<comment type="catalytic activity">
    <reaction evidence="1">
        <text>acetate + ATP + CoA = acetyl-CoA + AMP + diphosphate</text>
        <dbReference type="Rhea" id="RHEA:23176"/>
        <dbReference type="ChEBI" id="CHEBI:30089"/>
        <dbReference type="ChEBI" id="CHEBI:30616"/>
        <dbReference type="ChEBI" id="CHEBI:33019"/>
        <dbReference type="ChEBI" id="CHEBI:57287"/>
        <dbReference type="ChEBI" id="CHEBI:57288"/>
        <dbReference type="ChEBI" id="CHEBI:456215"/>
        <dbReference type="EC" id="6.2.1.1"/>
    </reaction>
</comment>
<comment type="cofactor">
    <cofactor evidence="1">
        <name>Mg(2+)</name>
        <dbReference type="ChEBI" id="CHEBI:18420"/>
    </cofactor>
</comment>
<comment type="PTM">
    <text evidence="1">Acetylated. Deacetylation by the SIR2-homolog deacetylase activates the enzyme.</text>
</comment>
<comment type="similarity">
    <text evidence="1">Belongs to the ATP-dependent AMP-binding enzyme family.</text>
</comment>
<reference key="1">
    <citation type="journal article" date="2001" name="Nature">
        <title>Genome sequence of enterohaemorrhagic Escherichia coli O157:H7.</title>
        <authorList>
            <person name="Perna N.T."/>
            <person name="Plunkett G. III"/>
            <person name="Burland V."/>
            <person name="Mau B."/>
            <person name="Glasner J.D."/>
            <person name="Rose D.J."/>
            <person name="Mayhew G.F."/>
            <person name="Evans P.S."/>
            <person name="Gregor J."/>
            <person name="Kirkpatrick H.A."/>
            <person name="Posfai G."/>
            <person name="Hackett J."/>
            <person name="Klink S."/>
            <person name="Boutin A."/>
            <person name="Shao Y."/>
            <person name="Miller L."/>
            <person name="Grotbeck E.J."/>
            <person name="Davis N.W."/>
            <person name="Lim A."/>
            <person name="Dimalanta E.T."/>
            <person name="Potamousis K."/>
            <person name="Apodaca J."/>
            <person name="Anantharaman T.S."/>
            <person name="Lin J."/>
            <person name="Yen G."/>
            <person name="Schwartz D.C."/>
            <person name="Welch R.A."/>
            <person name="Blattner F.R."/>
        </authorList>
    </citation>
    <scope>NUCLEOTIDE SEQUENCE [LARGE SCALE GENOMIC DNA]</scope>
    <source>
        <strain>O157:H7 / EDL933 / ATCC 700927 / EHEC</strain>
    </source>
</reference>
<reference key="2">
    <citation type="journal article" date="2001" name="DNA Res.">
        <title>Complete genome sequence of enterohemorrhagic Escherichia coli O157:H7 and genomic comparison with a laboratory strain K-12.</title>
        <authorList>
            <person name="Hayashi T."/>
            <person name="Makino K."/>
            <person name="Ohnishi M."/>
            <person name="Kurokawa K."/>
            <person name="Ishii K."/>
            <person name="Yokoyama K."/>
            <person name="Han C.-G."/>
            <person name="Ohtsubo E."/>
            <person name="Nakayama K."/>
            <person name="Murata T."/>
            <person name="Tanaka M."/>
            <person name="Tobe T."/>
            <person name="Iida T."/>
            <person name="Takami H."/>
            <person name="Honda T."/>
            <person name="Sasakawa C."/>
            <person name="Ogasawara N."/>
            <person name="Yasunaga T."/>
            <person name="Kuhara S."/>
            <person name="Shiba T."/>
            <person name="Hattori M."/>
            <person name="Shinagawa H."/>
        </authorList>
    </citation>
    <scope>NUCLEOTIDE SEQUENCE [LARGE SCALE GENOMIC DNA]</scope>
    <source>
        <strain>O157:H7 / Sakai / RIMD 0509952 / EHEC</strain>
    </source>
</reference>
<feature type="chain" id="PRO_0000208364" description="Acetyl-coenzyme A synthetase">
    <location>
        <begin position="1"/>
        <end position="652"/>
    </location>
</feature>
<feature type="binding site" evidence="1">
    <location>
        <begin position="191"/>
        <end position="194"/>
    </location>
    <ligand>
        <name>CoA</name>
        <dbReference type="ChEBI" id="CHEBI:57287"/>
    </ligand>
</feature>
<feature type="binding site" evidence="1">
    <location>
        <position position="311"/>
    </location>
    <ligand>
        <name>CoA</name>
        <dbReference type="ChEBI" id="CHEBI:57287"/>
    </ligand>
</feature>
<feature type="binding site" evidence="1">
    <location>
        <position position="335"/>
    </location>
    <ligand>
        <name>CoA</name>
        <dbReference type="ChEBI" id="CHEBI:57287"/>
    </ligand>
</feature>
<feature type="binding site" evidence="1">
    <location>
        <begin position="387"/>
        <end position="389"/>
    </location>
    <ligand>
        <name>ATP</name>
        <dbReference type="ChEBI" id="CHEBI:30616"/>
    </ligand>
</feature>
<feature type="binding site" evidence="1">
    <location>
        <begin position="411"/>
        <end position="416"/>
    </location>
    <ligand>
        <name>ATP</name>
        <dbReference type="ChEBI" id="CHEBI:30616"/>
    </ligand>
</feature>
<feature type="binding site" evidence="1">
    <location>
        <position position="500"/>
    </location>
    <ligand>
        <name>ATP</name>
        <dbReference type="ChEBI" id="CHEBI:30616"/>
    </ligand>
</feature>
<feature type="binding site" evidence="1">
    <location>
        <position position="515"/>
    </location>
    <ligand>
        <name>ATP</name>
        <dbReference type="ChEBI" id="CHEBI:30616"/>
    </ligand>
</feature>
<feature type="binding site" evidence="1">
    <location>
        <position position="523"/>
    </location>
    <ligand>
        <name>CoA</name>
        <dbReference type="ChEBI" id="CHEBI:57287"/>
    </ligand>
</feature>
<feature type="binding site" evidence="1">
    <location>
        <position position="526"/>
    </location>
    <ligand>
        <name>ATP</name>
        <dbReference type="ChEBI" id="CHEBI:30616"/>
    </ligand>
</feature>
<feature type="binding site" evidence="1">
    <location>
        <position position="537"/>
    </location>
    <ligand>
        <name>Mg(2+)</name>
        <dbReference type="ChEBI" id="CHEBI:18420"/>
    </ligand>
</feature>
<feature type="binding site" evidence="1">
    <location>
        <position position="539"/>
    </location>
    <ligand>
        <name>Mg(2+)</name>
        <dbReference type="ChEBI" id="CHEBI:18420"/>
    </ligand>
</feature>
<feature type="binding site" evidence="1">
    <location>
        <position position="542"/>
    </location>
    <ligand>
        <name>Mg(2+)</name>
        <dbReference type="ChEBI" id="CHEBI:18420"/>
    </ligand>
</feature>
<feature type="binding site" evidence="1">
    <location>
        <position position="584"/>
    </location>
    <ligand>
        <name>CoA</name>
        <dbReference type="ChEBI" id="CHEBI:57287"/>
    </ligand>
</feature>
<feature type="modified residue" description="N6-acetyllysine" evidence="1">
    <location>
        <position position="609"/>
    </location>
</feature>
<accession>Q8X5T5</accession>
<organism>
    <name type="scientific">Escherichia coli O157:H7</name>
    <dbReference type="NCBI Taxonomy" id="83334"/>
    <lineage>
        <taxon>Bacteria</taxon>
        <taxon>Pseudomonadati</taxon>
        <taxon>Pseudomonadota</taxon>
        <taxon>Gammaproteobacteria</taxon>
        <taxon>Enterobacterales</taxon>
        <taxon>Enterobacteriaceae</taxon>
        <taxon>Escherichia</taxon>
    </lineage>
</organism>
<proteinExistence type="inferred from homology"/>